<gene>
    <name evidence="1" type="primary">nrdI</name>
    <name type="ordered locus">Mvan_2041</name>
</gene>
<accession>A1T6Q8</accession>
<evidence type="ECO:0000255" key="1">
    <source>
        <dbReference type="HAMAP-Rule" id="MF_00128"/>
    </source>
</evidence>
<organism>
    <name type="scientific">Mycolicibacterium vanbaalenii (strain DSM 7251 / JCM 13017 / BCRC 16820 / KCTC 9966 / NRRL B-24157 / PYR-1)</name>
    <name type="common">Mycobacterium vanbaalenii</name>
    <dbReference type="NCBI Taxonomy" id="350058"/>
    <lineage>
        <taxon>Bacteria</taxon>
        <taxon>Bacillati</taxon>
        <taxon>Actinomycetota</taxon>
        <taxon>Actinomycetes</taxon>
        <taxon>Mycobacteriales</taxon>
        <taxon>Mycobacteriaceae</taxon>
        <taxon>Mycolicibacterium</taxon>
    </lineage>
</organism>
<name>NRDI_MYCVP</name>
<sequence>MSNLVYFSSVSENTHRFVEKLGLPATRIPIHGRIQVDEPYVLVLPTYGGGHANGPDPDRGGYVPKQVIAFLNDEHNRSLIRGVIAAGNTNFGAEFGYAGVIVSRKCGVPFLYRFELMGTTDDVFAVRQGLTDFWADARKDQTCHQPSQLQNL</sequence>
<dbReference type="EMBL" id="CP000511">
    <property type="protein sequence ID" value="ABM12858.1"/>
    <property type="molecule type" value="Genomic_DNA"/>
</dbReference>
<dbReference type="RefSeq" id="WP_011779274.1">
    <property type="nucleotide sequence ID" value="NZ_JACKSD010000322.1"/>
</dbReference>
<dbReference type="SMR" id="A1T6Q8"/>
<dbReference type="STRING" id="350058.Mvan_2041"/>
<dbReference type="KEGG" id="mva:Mvan_2041"/>
<dbReference type="eggNOG" id="COG1780">
    <property type="taxonomic scope" value="Bacteria"/>
</dbReference>
<dbReference type="HOGENOM" id="CLU_114845_0_0_11"/>
<dbReference type="Proteomes" id="UP000009159">
    <property type="component" value="Chromosome"/>
</dbReference>
<dbReference type="GO" id="GO:0010181">
    <property type="term" value="F:FMN binding"/>
    <property type="evidence" value="ECO:0007669"/>
    <property type="project" value="InterPro"/>
</dbReference>
<dbReference type="GO" id="GO:0036211">
    <property type="term" value="P:protein modification process"/>
    <property type="evidence" value="ECO:0007669"/>
    <property type="project" value="InterPro"/>
</dbReference>
<dbReference type="FunFam" id="3.40.50.360:FF:000005">
    <property type="entry name" value="Protein NrdI"/>
    <property type="match status" value="1"/>
</dbReference>
<dbReference type="Gene3D" id="3.40.50.360">
    <property type="match status" value="1"/>
</dbReference>
<dbReference type="HAMAP" id="MF_00128">
    <property type="entry name" value="NrdI"/>
    <property type="match status" value="1"/>
</dbReference>
<dbReference type="InterPro" id="IPR029039">
    <property type="entry name" value="Flavoprotein-like_sf"/>
</dbReference>
<dbReference type="InterPro" id="IPR020852">
    <property type="entry name" value="RNR_Ib_NrdI_bac"/>
</dbReference>
<dbReference type="InterPro" id="IPR004465">
    <property type="entry name" value="RNR_NrdI"/>
</dbReference>
<dbReference type="NCBIfam" id="TIGR00333">
    <property type="entry name" value="nrdI"/>
    <property type="match status" value="1"/>
</dbReference>
<dbReference type="PANTHER" id="PTHR37297">
    <property type="entry name" value="PROTEIN NRDI"/>
    <property type="match status" value="1"/>
</dbReference>
<dbReference type="PANTHER" id="PTHR37297:SF1">
    <property type="entry name" value="PROTEIN NRDI"/>
    <property type="match status" value="1"/>
</dbReference>
<dbReference type="Pfam" id="PF07972">
    <property type="entry name" value="Flavodoxin_NdrI"/>
    <property type="match status" value="1"/>
</dbReference>
<dbReference type="PIRSF" id="PIRSF005087">
    <property type="entry name" value="NrdI"/>
    <property type="match status" value="1"/>
</dbReference>
<dbReference type="SUPFAM" id="SSF52218">
    <property type="entry name" value="Flavoproteins"/>
    <property type="match status" value="1"/>
</dbReference>
<comment type="function">
    <text evidence="1">Probably involved in ribonucleotide reductase function.</text>
</comment>
<comment type="similarity">
    <text evidence="1">Belongs to the NrdI family.</text>
</comment>
<proteinExistence type="inferred from homology"/>
<feature type="chain" id="PRO_1000016515" description="Protein NrdI">
    <location>
        <begin position="1"/>
        <end position="152"/>
    </location>
</feature>
<reference key="1">
    <citation type="submission" date="2006-12" db="EMBL/GenBank/DDBJ databases">
        <title>Complete sequence of Mycobacterium vanbaalenii PYR-1.</title>
        <authorList>
            <consortium name="US DOE Joint Genome Institute"/>
            <person name="Copeland A."/>
            <person name="Lucas S."/>
            <person name="Lapidus A."/>
            <person name="Barry K."/>
            <person name="Detter J.C."/>
            <person name="Glavina del Rio T."/>
            <person name="Hammon N."/>
            <person name="Israni S."/>
            <person name="Dalin E."/>
            <person name="Tice H."/>
            <person name="Pitluck S."/>
            <person name="Singan V."/>
            <person name="Schmutz J."/>
            <person name="Larimer F."/>
            <person name="Land M."/>
            <person name="Hauser L."/>
            <person name="Kyrpides N."/>
            <person name="Anderson I.J."/>
            <person name="Miller C."/>
            <person name="Richardson P."/>
        </authorList>
    </citation>
    <scope>NUCLEOTIDE SEQUENCE [LARGE SCALE GENOMIC DNA]</scope>
    <source>
        <strain>DSM 7251 / JCM 13017 / BCRC 16820 / KCTC 9966 / NRRL B-24157 / PYR-1</strain>
    </source>
</reference>
<protein>
    <recommendedName>
        <fullName evidence="1">Protein NrdI</fullName>
    </recommendedName>
</protein>